<name>ATPA_RHORT</name>
<protein>
    <recommendedName>
        <fullName evidence="2">ATP synthase subunit alpha</fullName>
        <ecNumber evidence="2">7.1.2.2</ecNumber>
    </recommendedName>
    <alternativeName>
        <fullName evidence="2">ATP synthase F1 sector subunit alpha</fullName>
    </alternativeName>
    <alternativeName>
        <fullName evidence="2">F-ATPase subunit alpha</fullName>
    </alternativeName>
</protein>
<accession>Q2RV20</accession>
<keyword id="KW-0066">ATP synthesis</keyword>
<keyword id="KW-0067">ATP-binding</keyword>
<keyword id="KW-0997">Cell inner membrane</keyword>
<keyword id="KW-1003">Cell membrane</keyword>
<keyword id="KW-0139">CF(1)</keyword>
<keyword id="KW-0375">Hydrogen ion transport</keyword>
<keyword id="KW-0406">Ion transport</keyword>
<keyword id="KW-0472">Membrane</keyword>
<keyword id="KW-0547">Nucleotide-binding</keyword>
<keyword id="KW-1185">Reference proteome</keyword>
<keyword id="KW-1278">Translocase</keyword>
<keyword id="KW-0813">Transport</keyword>
<comment type="function">
    <text evidence="2">Produces ATP from ADP in the presence of a proton gradient across the membrane. The alpha chain is a regulatory subunit.</text>
</comment>
<comment type="catalytic activity">
    <reaction evidence="2">
        <text>ATP + H2O + 4 H(+)(in) = ADP + phosphate + 5 H(+)(out)</text>
        <dbReference type="Rhea" id="RHEA:57720"/>
        <dbReference type="ChEBI" id="CHEBI:15377"/>
        <dbReference type="ChEBI" id="CHEBI:15378"/>
        <dbReference type="ChEBI" id="CHEBI:30616"/>
        <dbReference type="ChEBI" id="CHEBI:43474"/>
        <dbReference type="ChEBI" id="CHEBI:456216"/>
        <dbReference type="EC" id="7.1.2.2"/>
    </reaction>
</comment>
<comment type="subunit">
    <text evidence="1">F-type ATPases have 2 components, CF(1) - the catalytic core - and CF(0) - the membrane proton channel. CF(1) has five subunits: alpha(3), beta(3), gamma(1), delta(1), epsilon(1). CF(0) has four main subunits: a(1), b(1), b'(1) and c(9-12) (By similarity).</text>
</comment>
<comment type="subcellular location">
    <subcellularLocation>
        <location evidence="2">Cell inner membrane</location>
        <topology evidence="2">Peripheral membrane protein</topology>
    </subcellularLocation>
</comment>
<comment type="similarity">
    <text evidence="2">Belongs to the ATPase alpha/beta chains family.</text>
</comment>
<proteinExistence type="inferred from homology"/>
<gene>
    <name evidence="2" type="primary">atpA</name>
    <name type="ordered locus">Rru_A1224</name>
</gene>
<feature type="chain" id="PRO_0000238343" description="ATP synthase subunit alpha">
    <location>
        <begin position="1"/>
        <end position="510"/>
    </location>
</feature>
<feature type="binding site" evidence="2">
    <location>
        <begin position="169"/>
        <end position="176"/>
    </location>
    <ligand>
        <name>ATP</name>
        <dbReference type="ChEBI" id="CHEBI:30616"/>
    </ligand>
</feature>
<feature type="site" description="Required for activity" evidence="2">
    <location>
        <position position="371"/>
    </location>
</feature>
<dbReference type="EC" id="7.1.2.2" evidence="2"/>
<dbReference type="EMBL" id="CP000230">
    <property type="protein sequence ID" value="ABC22025.1"/>
    <property type="molecule type" value="Genomic_DNA"/>
</dbReference>
<dbReference type="RefSeq" id="WP_011388979.1">
    <property type="nucleotide sequence ID" value="NC_007643.1"/>
</dbReference>
<dbReference type="RefSeq" id="YP_426312.1">
    <property type="nucleotide sequence ID" value="NC_007643.1"/>
</dbReference>
<dbReference type="SMR" id="Q2RV20"/>
<dbReference type="STRING" id="269796.Rru_A1224"/>
<dbReference type="EnsemblBacteria" id="ABC22025">
    <property type="protein sequence ID" value="ABC22025"/>
    <property type="gene ID" value="Rru_A1224"/>
</dbReference>
<dbReference type="KEGG" id="rru:Rru_A1224"/>
<dbReference type="PATRIC" id="fig|269796.9.peg.1289"/>
<dbReference type="eggNOG" id="COG0056">
    <property type="taxonomic scope" value="Bacteria"/>
</dbReference>
<dbReference type="HOGENOM" id="CLU_010091_2_1_5"/>
<dbReference type="PhylomeDB" id="Q2RV20"/>
<dbReference type="Proteomes" id="UP000001929">
    <property type="component" value="Chromosome"/>
</dbReference>
<dbReference type="GO" id="GO:0005886">
    <property type="term" value="C:plasma membrane"/>
    <property type="evidence" value="ECO:0007669"/>
    <property type="project" value="UniProtKB-SubCell"/>
</dbReference>
<dbReference type="GO" id="GO:0045259">
    <property type="term" value="C:proton-transporting ATP synthase complex"/>
    <property type="evidence" value="ECO:0007669"/>
    <property type="project" value="UniProtKB-KW"/>
</dbReference>
<dbReference type="GO" id="GO:0043531">
    <property type="term" value="F:ADP binding"/>
    <property type="evidence" value="ECO:0007669"/>
    <property type="project" value="TreeGrafter"/>
</dbReference>
<dbReference type="GO" id="GO:0005524">
    <property type="term" value="F:ATP binding"/>
    <property type="evidence" value="ECO:0007669"/>
    <property type="project" value="UniProtKB-UniRule"/>
</dbReference>
<dbReference type="GO" id="GO:0046933">
    <property type="term" value="F:proton-transporting ATP synthase activity, rotational mechanism"/>
    <property type="evidence" value="ECO:0007669"/>
    <property type="project" value="UniProtKB-UniRule"/>
</dbReference>
<dbReference type="CDD" id="cd18113">
    <property type="entry name" value="ATP-synt_F1_alpha_C"/>
    <property type="match status" value="1"/>
</dbReference>
<dbReference type="CDD" id="cd18116">
    <property type="entry name" value="ATP-synt_F1_alpha_N"/>
    <property type="match status" value="1"/>
</dbReference>
<dbReference type="CDD" id="cd01132">
    <property type="entry name" value="F1-ATPase_alpha_CD"/>
    <property type="match status" value="1"/>
</dbReference>
<dbReference type="FunFam" id="1.20.150.20:FF:000001">
    <property type="entry name" value="ATP synthase subunit alpha"/>
    <property type="match status" value="1"/>
</dbReference>
<dbReference type="FunFam" id="2.40.30.20:FF:000001">
    <property type="entry name" value="ATP synthase subunit alpha"/>
    <property type="match status" value="1"/>
</dbReference>
<dbReference type="FunFam" id="3.40.50.300:FF:002432">
    <property type="entry name" value="ATP synthase subunit alpha, mitochondrial"/>
    <property type="match status" value="1"/>
</dbReference>
<dbReference type="Gene3D" id="2.40.30.20">
    <property type="match status" value="1"/>
</dbReference>
<dbReference type="Gene3D" id="1.20.150.20">
    <property type="entry name" value="ATP synthase alpha/beta chain, C-terminal domain"/>
    <property type="match status" value="1"/>
</dbReference>
<dbReference type="Gene3D" id="3.40.50.300">
    <property type="entry name" value="P-loop containing nucleotide triphosphate hydrolases"/>
    <property type="match status" value="1"/>
</dbReference>
<dbReference type="HAMAP" id="MF_01346">
    <property type="entry name" value="ATP_synth_alpha_bact"/>
    <property type="match status" value="1"/>
</dbReference>
<dbReference type="InterPro" id="IPR023366">
    <property type="entry name" value="ATP_synth_asu-like_sf"/>
</dbReference>
<dbReference type="InterPro" id="IPR000793">
    <property type="entry name" value="ATP_synth_asu_C"/>
</dbReference>
<dbReference type="InterPro" id="IPR038376">
    <property type="entry name" value="ATP_synth_asu_C_sf"/>
</dbReference>
<dbReference type="InterPro" id="IPR033732">
    <property type="entry name" value="ATP_synth_F1_a_nt-bd_dom"/>
</dbReference>
<dbReference type="InterPro" id="IPR005294">
    <property type="entry name" value="ATP_synth_F1_asu"/>
</dbReference>
<dbReference type="InterPro" id="IPR020003">
    <property type="entry name" value="ATPase_a/bsu_AS"/>
</dbReference>
<dbReference type="InterPro" id="IPR004100">
    <property type="entry name" value="ATPase_F1/V1/A1_a/bsu_N"/>
</dbReference>
<dbReference type="InterPro" id="IPR036121">
    <property type="entry name" value="ATPase_F1/V1/A1_a/bsu_N_sf"/>
</dbReference>
<dbReference type="InterPro" id="IPR000194">
    <property type="entry name" value="ATPase_F1/V1/A1_a/bsu_nucl-bd"/>
</dbReference>
<dbReference type="InterPro" id="IPR027417">
    <property type="entry name" value="P-loop_NTPase"/>
</dbReference>
<dbReference type="NCBIfam" id="TIGR00962">
    <property type="entry name" value="atpA"/>
    <property type="match status" value="1"/>
</dbReference>
<dbReference type="NCBIfam" id="NF009884">
    <property type="entry name" value="PRK13343.1"/>
    <property type="match status" value="1"/>
</dbReference>
<dbReference type="PANTHER" id="PTHR48082">
    <property type="entry name" value="ATP SYNTHASE SUBUNIT ALPHA, MITOCHONDRIAL"/>
    <property type="match status" value="1"/>
</dbReference>
<dbReference type="PANTHER" id="PTHR48082:SF2">
    <property type="entry name" value="ATP SYNTHASE SUBUNIT ALPHA, MITOCHONDRIAL"/>
    <property type="match status" value="1"/>
</dbReference>
<dbReference type="Pfam" id="PF00006">
    <property type="entry name" value="ATP-synt_ab"/>
    <property type="match status" value="1"/>
</dbReference>
<dbReference type="Pfam" id="PF00306">
    <property type="entry name" value="ATP-synt_ab_C"/>
    <property type="match status" value="1"/>
</dbReference>
<dbReference type="Pfam" id="PF02874">
    <property type="entry name" value="ATP-synt_ab_N"/>
    <property type="match status" value="1"/>
</dbReference>
<dbReference type="PIRSF" id="PIRSF039088">
    <property type="entry name" value="F_ATPase_subunit_alpha"/>
    <property type="match status" value="1"/>
</dbReference>
<dbReference type="SUPFAM" id="SSF47917">
    <property type="entry name" value="C-terminal domain of alpha and beta subunits of F1 ATP synthase"/>
    <property type="match status" value="1"/>
</dbReference>
<dbReference type="SUPFAM" id="SSF50615">
    <property type="entry name" value="N-terminal domain of alpha and beta subunits of F1 ATP synthase"/>
    <property type="match status" value="1"/>
</dbReference>
<dbReference type="SUPFAM" id="SSF52540">
    <property type="entry name" value="P-loop containing nucleoside triphosphate hydrolases"/>
    <property type="match status" value="1"/>
</dbReference>
<dbReference type="PROSITE" id="PS00152">
    <property type="entry name" value="ATPASE_ALPHA_BETA"/>
    <property type="match status" value="1"/>
</dbReference>
<sequence>MEIRAAEISAILKEQIANFGTEAESAEVGQVLSVGDGIARVYGLDNVQAGEMVEFANGVKGMALNLESDNVGIVIFGEDRGIKEGDVVKRTQTIVDVPVGKGLLGRVVDGLGNPIDGKGDLVDVERKRAEVKAPGIIPRKSVHEPVQTGIKAIDSLIPIGRGQRELIIGDRQTGKTAVILDTILNQKAVNDKAKDDSEKLFCVYVAVGQKRSTVAQVVKVLADHGALDYTIVVAATASEPAPLQFLAPYTGCTMGEFFRDNGMHAVIFYDDLTKQAVAYRQMSLLLRRPPGREAFPGDVFYLHSRLLERAAKLNDDNGAGSLTALPVIETQANDVSAYIPTNVISITDGQIFLETDLFFKGIRPAVNVGLSVSRVGSSAQIKAMKQVAGSIKLELAQYREMAAFAQFASDLDPATQKLLARGARLTELLKQAQYSPLAVEEQVCVIYAGTRGYLDKLKTTDVVRYEASLLGALRTSGADLLESIRTGKALSKEIEQKLVKFLDDFGKKFA</sequence>
<evidence type="ECO:0000250" key="1"/>
<evidence type="ECO:0000255" key="2">
    <source>
        <dbReference type="HAMAP-Rule" id="MF_01346"/>
    </source>
</evidence>
<reference key="1">
    <citation type="journal article" date="2011" name="Stand. Genomic Sci.">
        <title>Complete genome sequence of Rhodospirillum rubrum type strain (S1).</title>
        <authorList>
            <person name="Munk A.C."/>
            <person name="Copeland A."/>
            <person name="Lucas S."/>
            <person name="Lapidus A."/>
            <person name="Del Rio T.G."/>
            <person name="Barry K."/>
            <person name="Detter J.C."/>
            <person name="Hammon N."/>
            <person name="Israni S."/>
            <person name="Pitluck S."/>
            <person name="Brettin T."/>
            <person name="Bruce D."/>
            <person name="Han C."/>
            <person name="Tapia R."/>
            <person name="Gilna P."/>
            <person name="Schmutz J."/>
            <person name="Larimer F."/>
            <person name="Land M."/>
            <person name="Kyrpides N.C."/>
            <person name="Mavromatis K."/>
            <person name="Richardson P."/>
            <person name="Rohde M."/>
            <person name="Goeker M."/>
            <person name="Klenk H.P."/>
            <person name="Zhang Y."/>
            <person name="Roberts G.P."/>
            <person name="Reslewic S."/>
            <person name="Schwartz D.C."/>
        </authorList>
    </citation>
    <scope>NUCLEOTIDE SEQUENCE [LARGE SCALE GENOMIC DNA]</scope>
    <source>
        <strain>ATCC 11170 / ATH 1.1.1 / DSM 467 / LMG 4362 / NCIMB 8255 / S1</strain>
    </source>
</reference>
<organism>
    <name type="scientific">Rhodospirillum rubrum (strain ATCC 11170 / ATH 1.1.1 / DSM 467 / LMG 4362 / NCIMB 8255 / S1)</name>
    <dbReference type="NCBI Taxonomy" id="269796"/>
    <lineage>
        <taxon>Bacteria</taxon>
        <taxon>Pseudomonadati</taxon>
        <taxon>Pseudomonadota</taxon>
        <taxon>Alphaproteobacteria</taxon>
        <taxon>Rhodospirillales</taxon>
        <taxon>Rhodospirillaceae</taxon>
        <taxon>Rhodospirillum</taxon>
    </lineage>
</organism>